<evidence type="ECO:0000250" key="1"/>
<evidence type="ECO:0000250" key="2">
    <source>
        <dbReference type="UniProtKB" id="P62714"/>
    </source>
</evidence>
<evidence type="ECO:0000250" key="3">
    <source>
        <dbReference type="UniProtKB" id="P67774"/>
    </source>
</evidence>
<evidence type="ECO:0000250" key="4">
    <source>
        <dbReference type="UniProtKB" id="P67775"/>
    </source>
</evidence>
<evidence type="ECO:0000269" key="5">
    <source>
    </source>
</evidence>
<evidence type="ECO:0000269" key="6">
    <source>
    </source>
</evidence>
<evidence type="ECO:0000269" key="7">
    <source>
    </source>
</evidence>
<evidence type="ECO:0000303" key="8">
    <source>
    </source>
</evidence>
<evidence type="ECO:0000303" key="9">
    <source>
    </source>
</evidence>
<evidence type="ECO:0000305" key="10"/>
<evidence type="ECO:0000305" key="11">
    <source>
    </source>
</evidence>
<keyword id="KW-0963">Cytoplasm</keyword>
<keyword id="KW-0378">Hydrolase</keyword>
<keyword id="KW-0464">Manganese</keyword>
<keyword id="KW-0479">Metal-binding</keyword>
<keyword id="KW-0488">Methylation</keyword>
<keyword id="KW-0597">Phosphoprotein</keyword>
<keyword id="KW-0611">Plant defense</keyword>
<keyword id="KW-0904">Protein phosphatase</keyword>
<keyword id="KW-1185">Reference proteome</keyword>
<feature type="chain" id="PRO_0000058855" description="Serine/threonine-protein phosphatase PP2A-4 catalytic subunit">
    <location>
        <begin position="1"/>
        <end position="313"/>
    </location>
</feature>
<feature type="active site" description="Proton donor" evidence="1">
    <location>
        <position position="122"/>
    </location>
</feature>
<feature type="binding site" evidence="4">
    <location>
        <position position="61"/>
    </location>
    <ligand>
        <name>Mn(2+)</name>
        <dbReference type="ChEBI" id="CHEBI:29035"/>
        <label>1</label>
    </ligand>
</feature>
<feature type="binding site" evidence="4">
    <location>
        <position position="63"/>
    </location>
    <ligand>
        <name>Mn(2+)</name>
        <dbReference type="ChEBI" id="CHEBI:29035"/>
        <label>1</label>
    </ligand>
</feature>
<feature type="binding site" evidence="4">
    <location>
        <position position="89"/>
    </location>
    <ligand>
        <name>Mn(2+)</name>
        <dbReference type="ChEBI" id="CHEBI:29035"/>
        <label>1</label>
    </ligand>
</feature>
<feature type="binding site" evidence="4">
    <location>
        <position position="89"/>
    </location>
    <ligand>
        <name>Mn(2+)</name>
        <dbReference type="ChEBI" id="CHEBI:29035"/>
        <label>2</label>
    </ligand>
</feature>
<feature type="binding site" evidence="4">
    <location>
        <position position="121"/>
    </location>
    <ligand>
        <name>Mn(2+)</name>
        <dbReference type="ChEBI" id="CHEBI:29035"/>
        <label>2</label>
    </ligand>
</feature>
<feature type="binding site" evidence="4">
    <location>
        <position position="171"/>
    </location>
    <ligand>
        <name>Mn(2+)</name>
        <dbReference type="ChEBI" id="CHEBI:29035"/>
        <label>2</label>
    </ligand>
</feature>
<feature type="binding site" evidence="4">
    <location>
        <position position="245"/>
    </location>
    <ligand>
        <name>Mn(2+)</name>
        <dbReference type="ChEBI" id="CHEBI:29035"/>
        <label>2</label>
    </ligand>
</feature>
<feature type="modified residue" description="Leucine methyl ester" evidence="11">
    <location>
        <position position="313"/>
    </location>
</feature>
<organism>
    <name type="scientific">Arabidopsis thaliana</name>
    <name type="common">Mouse-ear cress</name>
    <dbReference type="NCBI Taxonomy" id="3702"/>
    <lineage>
        <taxon>Eukaryota</taxon>
        <taxon>Viridiplantae</taxon>
        <taxon>Streptophyta</taxon>
        <taxon>Embryophyta</taxon>
        <taxon>Tracheophyta</taxon>
        <taxon>Spermatophyta</taxon>
        <taxon>Magnoliopsida</taxon>
        <taxon>eudicotyledons</taxon>
        <taxon>Gunneridae</taxon>
        <taxon>Pentapetalae</taxon>
        <taxon>rosids</taxon>
        <taxon>malvids</taxon>
        <taxon>Brassicales</taxon>
        <taxon>Brassicaceae</taxon>
        <taxon>Camelineae</taxon>
        <taxon>Arabidopsis</taxon>
    </lineage>
</organism>
<dbReference type="EC" id="3.1.3.16"/>
<dbReference type="EMBL" id="U08047">
    <property type="protein sequence ID" value="AAA64941.1"/>
    <property type="molecule type" value="mRNA"/>
</dbReference>
<dbReference type="EMBL" id="U60136">
    <property type="protein sequence ID" value="AAD10855.1"/>
    <property type="molecule type" value="Genomic_DNA"/>
</dbReference>
<dbReference type="EMBL" id="AL137082">
    <property type="protein sequence ID" value="CAB68188.1"/>
    <property type="status" value="ALT_SEQ"/>
    <property type="molecule type" value="Genomic_DNA"/>
</dbReference>
<dbReference type="EMBL" id="CP002686">
    <property type="protein sequence ID" value="AEE79790.1"/>
    <property type="molecule type" value="Genomic_DNA"/>
</dbReference>
<dbReference type="EMBL" id="AY057604">
    <property type="protein sequence ID" value="AAL14399.1"/>
    <property type="molecule type" value="mRNA"/>
</dbReference>
<dbReference type="EMBL" id="AY056222">
    <property type="protein sequence ID" value="AAL07071.1"/>
    <property type="molecule type" value="mRNA"/>
</dbReference>
<dbReference type="EMBL" id="AY113023">
    <property type="protein sequence ID" value="AAM47331.1"/>
    <property type="molecule type" value="mRNA"/>
</dbReference>
<dbReference type="PIR" id="S52660">
    <property type="entry name" value="S52660"/>
</dbReference>
<dbReference type="RefSeq" id="NP_567066.1">
    <property type="nucleotide sequence ID" value="NM_115712.4"/>
</dbReference>
<dbReference type="SMR" id="P48578"/>
<dbReference type="BioGRID" id="10334">
    <property type="interactions" value="10"/>
</dbReference>
<dbReference type="FunCoup" id="P48578">
    <property type="interactions" value="4035"/>
</dbReference>
<dbReference type="IntAct" id="P48578">
    <property type="interactions" value="2"/>
</dbReference>
<dbReference type="STRING" id="3702.P48578"/>
<dbReference type="PaxDb" id="3702-AT3G58500.1"/>
<dbReference type="ProteomicsDB" id="249208"/>
<dbReference type="EnsemblPlants" id="AT3G58500.1">
    <property type="protein sequence ID" value="AT3G58500.1"/>
    <property type="gene ID" value="AT3G58500"/>
</dbReference>
<dbReference type="GeneID" id="825019"/>
<dbReference type="Gramene" id="AT3G58500.1">
    <property type="protein sequence ID" value="AT3G58500.1"/>
    <property type="gene ID" value="AT3G58500"/>
</dbReference>
<dbReference type="KEGG" id="ath:AT3G58500"/>
<dbReference type="Araport" id="AT3G58500"/>
<dbReference type="TAIR" id="AT3G58500">
    <property type="gene designation" value="PP2A-4"/>
</dbReference>
<dbReference type="eggNOG" id="KOG0371">
    <property type="taxonomic scope" value="Eukaryota"/>
</dbReference>
<dbReference type="HOGENOM" id="CLU_004962_8_1_1"/>
<dbReference type="InParanoid" id="P48578"/>
<dbReference type="OMA" id="MDDKTFT"/>
<dbReference type="OrthoDB" id="1930084at2759"/>
<dbReference type="PhylomeDB" id="P48578"/>
<dbReference type="PRO" id="PR:P48578"/>
<dbReference type="Proteomes" id="UP000006548">
    <property type="component" value="Chromosome 3"/>
</dbReference>
<dbReference type="ExpressionAtlas" id="P48578">
    <property type="expression patterns" value="baseline and differential"/>
</dbReference>
<dbReference type="GO" id="GO:0005737">
    <property type="term" value="C:cytoplasm"/>
    <property type="evidence" value="ECO:0007005"/>
    <property type="project" value="TAIR"/>
</dbReference>
<dbReference type="GO" id="GO:0005730">
    <property type="term" value="C:nucleolus"/>
    <property type="evidence" value="ECO:0007005"/>
    <property type="project" value="TAIR"/>
</dbReference>
<dbReference type="GO" id="GO:0005634">
    <property type="term" value="C:nucleus"/>
    <property type="evidence" value="ECO:0007005"/>
    <property type="project" value="TAIR"/>
</dbReference>
<dbReference type="GO" id="GO:0000159">
    <property type="term" value="C:protein phosphatase type 2A complex"/>
    <property type="evidence" value="ECO:0000304"/>
    <property type="project" value="TAIR"/>
</dbReference>
<dbReference type="GO" id="GO:0046872">
    <property type="term" value="F:metal ion binding"/>
    <property type="evidence" value="ECO:0007669"/>
    <property type="project" value="UniProtKB-KW"/>
</dbReference>
<dbReference type="GO" id="GO:0004722">
    <property type="term" value="F:protein serine/threonine phosphatase activity"/>
    <property type="evidence" value="ECO:0007669"/>
    <property type="project" value="UniProtKB-EC"/>
</dbReference>
<dbReference type="GO" id="GO:0006952">
    <property type="term" value="P:defense response"/>
    <property type="evidence" value="ECO:0007669"/>
    <property type="project" value="UniProtKB-KW"/>
</dbReference>
<dbReference type="GO" id="GO:0006470">
    <property type="term" value="P:protein dephosphorylation"/>
    <property type="evidence" value="ECO:0000304"/>
    <property type="project" value="TAIR"/>
</dbReference>
<dbReference type="CDD" id="cd07415">
    <property type="entry name" value="MPP_PP2A_PP4_PP6"/>
    <property type="match status" value="1"/>
</dbReference>
<dbReference type="FunFam" id="3.60.21.10:FF:000003">
    <property type="entry name" value="Serine/threonine-protein phosphatase"/>
    <property type="match status" value="1"/>
</dbReference>
<dbReference type="Gene3D" id="3.60.21.10">
    <property type="match status" value="1"/>
</dbReference>
<dbReference type="InterPro" id="IPR004843">
    <property type="entry name" value="Calcineurin-like_PHP_ApaH"/>
</dbReference>
<dbReference type="InterPro" id="IPR029052">
    <property type="entry name" value="Metallo-depent_PP-like"/>
</dbReference>
<dbReference type="InterPro" id="IPR047129">
    <property type="entry name" value="PPA2-like"/>
</dbReference>
<dbReference type="InterPro" id="IPR006186">
    <property type="entry name" value="Ser/Thr-sp_prot-phosphatase"/>
</dbReference>
<dbReference type="PANTHER" id="PTHR45619">
    <property type="entry name" value="SERINE/THREONINE-PROTEIN PHOSPHATASE PP2A-RELATED"/>
    <property type="match status" value="1"/>
</dbReference>
<dbReference type="Pfam" id="PF00149">
    <property type="entry name" value="Metallophos"/>
    <property type="match status" value="1"/>
</dbReference>
<dbReference type="PRINTS" id="PR00114">
    <property type="entry name" value="STPHPHTASE"/>
</dbReference>
<dbReference type="SMART" id="SM00156">
    <property type="entry name" value="PP2Ac"/>
    <property type="match status" value="1"/>
</dbReference>
<dbReference type="SUPFAM" id="SSF56300">
    <property type="entry name" value="Metallo-dependent phosphatases"/>
    <property type="match status" value="1"/>
</dbReference>
<dbReference type="PROSITE" id="PS00125">
    <property type="entry name" value="SER_THR_PHOSPHATASE"/>
    <property type="match status" value="1"/>
</dbReference>
<reference key="1">
    <citation type="journal article" date="1994" name="Plant Mol. Biol.">
        <title>Molecular characterization of a fourth isoform of the catalytic subunit of protein phosphatase 2A from Arabidopsis thaliana.</title>
        <authorList>
            <person name="Casamayor A."/>
            <person name="Perez-Callejon E."/>
            <person name="Pujol G."/>
            <person name="Arino J."/>
            <person name="Ferrer A."/>
        </authorList>
    </citation>
    <scope>NUCLEOTIDE SEQUENCE [MRNA]</scope>
    <source>
        <strain>cv. Columbia GL1</strain>
        <tissue>Leaf</tissue>
    </source>
</reference>
<reference key="2">
    <citation type="journal article" date="1998" name="Gene">
        <title>Molecular cloning and characterization of two phosphatase 2A catalytic subunit genes from Arabidopsis thaliana.</title>
        <authorList>
            <person name="Perez-Callejon E."/>
            <person name="Casamayor A."/>
            <person name="Pujol G."/>
            <person name="Camps M."/>
            <person name="Ferrer A."/>
            <person name="Arino J."/>
        </authorList>
    </citation>
    <scope>NUCLEOTIDE SEQUENCE [GENOMIC DNA]</scope>
</reference>
<reference key="3">
    <citation type="journal article" date="2000" name="Nature">
        <title>Sequence and analysis of chromosome 3 of the plant Arabidopsis thaliana.</title>
        <authorList>
            <person name="Salanoubat M."/>
            <person name="Lemcke K."/>
            <person name="Rieger M."/>
            <person name="Ansorge W."/>
            <person name="Unseld M."/>
            <person name="Fartmann B."/>
            <person name="Valle G."/>
            <person name="Bloecker H."/>
            <person name="Perez-Alonso M."/>
            <person name="Obermaier B."/>
            <person name="Delseny M."/>
            <person name="Boutry M."/>
            <person name="Grivell L.A."/>
            <person name="Mache R."/>
            <person name="Puigdomenech P."/>
            <person name="De Simone V."/>
            <person name="Choisne N."/>
            <person name="Artiguenave F."/>
            <person name="Robert C."/>
            <person name="Brottier P."/>
            <person name="Wincker P."/>
            <person name="Cattolico L."/>
            <person name="Weissenbach J."/>
            <person name="Saurin W."/>
            <person name="Quetier F."/>
            <person name="Schaefer M."/>
            <person name="Mueller-Auer S."/>
            <person name="Gabel C."/>
            <person name="Fuchs M."/>
            <person name="Benes V."/>
            <person name="Wurmbach E."/>
            <person name="Drzonek H."/>
            <person name="Erfle H."/>
            <person name="Jordan N."/>
            <person name="Bangert S."/>
            <person name="Wiedelmann R."/>
            <person name="Kranz H."/>
            <person name="Voss H."/>
            <person name="Holland R."/>
            <person name="Brandt P."/>
            <person name="Nyakatura G."/>
            <person name="Vezzi A."/>
            <person name="D'Angelo M."/>
            <person name="Pallavicini A."/>
            <person name="Toppo S."/>
            <person name="Simionati B."/>
            <person name="Conrad A."/>
            <person name="Hornischer K."/>
            <person name="Kauer G."/>
            <person name="Loehnert T.-H."/>
            <person name="Nordsiek G."/>
            <person name="Reichelt J."/>
            <person name="Scharfe M."/>
            <person name="Schoen O."/>
            <person name="Bargues M."/>
            <person name="Terol J."/>
            <person name="Climent J."/>
            <person name="Navarro P."/>
            <person name="Collado C."/>
            <person name="Perez-Perez A."/>
            <person name="Ottenwaelder B."/>
            <person name="Duchemin D."/>
            <person name="Cooke R."/>
            <person name="Laudie M."/>
            <person name="Berger-Llauro C."/>
            <person name="Purnelle B."/>
            <person name="Masuy D."/>
            <person name="de Haan M."/>
            <person name="Maarse A.C."/>
            <person name="Alcaraz J.-P."/>
            <person name="Cottet A."/>
            <person name="Casacuberta E."/>
            <person name="Monfort A."/>
            <person name="Argiriou A."/>
            <person name="Flores M."/>
            <person name="Liguori R."/>
            <person name="Vitale D."/>
            <person name="Mannhaupt G."/>
            <person name="Haase D."/>
            <person name="Schoof H."/>
            <person name="Rudd S."/>
            <person name="Zaccaria P."/>
            <person name="Mewes H.-W."/>
            <person name="Mayer K.F.X."/>
            <person name="Kaul S."/>
            <person name="Town C.D."/>
            <person name="Koo H.L."/>
            <person name="Tallon L.J."/>
            <person name="Jenkins J."/>
            <person name="Rooney T."/>
            <person name="Rizzo M."/>
            <person name="Walts A."/>
            <person name="Utterback T."/>
            <person name="Fujii C.Y."/>
            <person name="Shea T.P."/>
            <person name="Creasy T.H."/>
            <person name="Haas B."/>
            <person name="Maiti R."/>
            <person name="Wu D."/>
            <person name="Peterson J."/>
            <person name="Van Aken S."/>
            <person name="Pai G."/>
            <person name="Militscher J."/>
            <person name="Sellers P."/>
            <person name="Gill J.E."/>
            <person name="Feldblyum T.V."/>
            <person name="Preuss D."/>
            <person name="Lin X."/>
            <person name="Nierman W.C."/>
            <person name="Salzberg S.L."/>
            <person name="White O."/>
            <person name="Venter J.C."/>
            <person name="Fraser C.M."/>
            <person name="Kaneko T."/>
            <person name="Nakamura Y."/>
            <person name="Sato S."/>
            <person name="Kato T."/>
            <person name="Asamizu E."/>
            <person name="Sasamoto S."/>
            <person name="Kimura T."/>
            <person name="Idesawa K."/>
            <person name="Kawashima K."/>
            <person name="Kishida Y."/>
            <person name="Kiyokawa C."/>
            <person name="Kohara M."/>
            <person name="Matsumoto M."/>
            <person name="Matsuno A."/>
            <person name="Muraki A."/>
            <person name="Nakayama S."/>
            <person name="Nakazaki N."/>
            <person name="Shinpo S."/>
            <person name="Takeuchi C."/>
            <person name="Wada T."/>
            <person name="Watanabe A."/>
            <person name="Yamada M."/>
            <person name="Yasuda M."/>
            <person name="Tabata S."/>
        </authorList>
    </citation>
    <scope>NUCLEOTIDE SEQUENCE [LARGE SCALE GENOMIC DNA]</scope>
    <source>
        <strain>cv. Columbia</strain>
    </source>
</reference>
<reference key="4">
    <citation type="journal article" date="2017" name="Plant J.">
        <title>Araport11: a complete reannotation of the Arabidopsis thaliana reference genome.</title>
        <authorList>
            <person name="Cheng C.Y."/>
            <person name="Krishnakumar V."/>
            <person name="Chan A.P."/>
            <person name="Thibaud-Nissen F."/>
            <person name="Schobel S."/>
            <person name="Town C.D."/>
        </authorList>
    </citation>
    <scope>GENOME REANNOTATION</scope>
    <source>
        <strain>cv. Columbia</strain>
    </source>
</reference>
<reference key="5">
    <citation type="journal article" date="2003" name="Science">
        <title>Empirical analysis of transcriptional activity in the Arabidopsis genome.</title>
        <authorList>
            <person name="Yamada K."/>
            <person name="Lim J."/>
            <person name="Dale J.M."/>
            <person name="Chen H."/>
            <person name="Shinn P."/>
            <person name="Palm C.J."/>
            <person name="Southwick A.M."/>
            <person name="Wu H.C."/>
            <person name="Kim C.J."/>
            <person name="Nguyen M."/>
            <person name="Pham P.K."/>
            <person name="Cheuk R.F."/>
            <person name="Karlin-Newmann G."/>
            <person name="Liu S.X."/>
            <person name="Lam B."/>
            <person name="Sakano H."/>
            <person name="Wu T."/>
            <person name="Yu G."/>
            <person name="Miranda M."/>
            <person name="Quach H.L."/>
            <person name="Tripp M."/>
            <person name="Chang C.H."/>
            <person name="Lee J.M."/>
            <person name="Toriumi M.J."/>
            <person name="Chan M.M."/>
            <person name="Tang C.C."/>
            <person name="Onodera C.S."/>
            <person name="Deng J.M."/>
            <person name="Akiyama K."/>
            <person name="Ansari Y."/>
            <person name="Arakawa T."/>
            <person name="Banh J."/>
            <person name="Banno F."/>
            <person name="Bowser L."/>
            <person name="Brooks S.Y."/>
            <person name="Carninci P."/>
            <person name="Chao Q."/>
            <person name="Choy N."/>
            <person name="Enju A."/>
            <person name="Goldsmith A.D."/>
            <person name="Gurjal M."/>
            <person name="Hansen N.F."/>
            <person name="Hayashizaki Y."/>
            <person name="Johnson-Hopson C."/>
            <person name="Hsuan V.W."/>
            <person name="Iida K."/>
            <person name="Karnes M."/>
            <person name="Khan S."/>
            <person name="Koesema E."/>
            <person name="Ishida J."/>
            <person name="Jiang P.X."/>
            <person name="Jones T."/>
            <person name="Kawai J."/>
            <person name="Kamiya A."/>
            <person name="Meyers C."/>
            <person name="Nakajima M."/>
            <person name="Narusaka M."/>
            <person name="Seki M."/>
            <person name="Sakurai T."/>
            <person name="Satou M."/>
            <person name="Tamse R."/>
            <person name="Vaysberg M."/>
            <person name="Wallender E.K."/>
            <person name="Wong C."/>
            <person name="Yamamura Y."/>
            <person name="Yuan S."/>
            <person name="Shinozaki K."/>
            <person name="Davis R.W."/>
            <person name="Theologis A."/>
            <person name="Ecker J.R."/>
        </authorList>
    </citation>
    <scope>NUCLEOTIDE SEQUENCE [LARGE SCALE MRNA]</scope>
    <source>
        <strain>cv. Columbia</strain>
    </source>
</reference>
<reference key="6">
    <citation type="journal article" date="2007" name="Trends Plant Sci.">
        <title>Arabidopsis PPP family of serine/threonine phosphatases.</title>
        <authorList>
            <person name="Farkas I."/>
            <person name="Dombradi V."/>
            <person name="Miskei M."/>
            <person name="Szabados L."/>
            <person name="Koncz C."/>
        </authorList>
    </citation>
    <scope>GENE FAMILY</scope>
    <scope>NOMENCLATURE</scope>
</reference>
<reference key="7">
    <citation type="journal article" date="2013" name="Plant J.">
        <title>Specialized functions of the PP2A subfamily II catalytic subunits PP2A-C3 and PP2A-C4 in the distribution of auxin fluxes and development in Arabidopsis.</title>
        <authorList>
            <person name="Ballesteros I."/>
            <person name="Dominguez T."/>
            <person name="Sauer M."/>
            <person name="Paredes P."/>
            <person name="Duprat A."/>
            <person name="Rojo E."/>
            <person name="Sanmartin M."/>
            <person name="Sanchez-Serrano J.J."/>
        </authorList>
    </citation>
    <scope>FUNCTION</scope>
</reference>
<reference key="8">
    <citation type="journal article" date="2014" name="EMBO J.">
        <title>Negative control of BAK1 by protein phosphatase 2A during plant innate immunity.</title>
        <authorList>
            <person name="Segonzac C."/>
            <person name="Macho A.P."/>
            <person name="Sanmartin M."/>
            <person name="Ntoukakis V."/>
            <person name="Sanchez-Serrano J.J."/>
            <person name="Zipfel C."/>
        </authorList>
    </citation>
    <scope>FUNCTION</scope>
</reference>
<reference key="9">
    <citation type="journal article" date="2016" name="Proc. Natl. Acad. Sci. U.S.A.">
        <title>ROTUNDA3 function in plant development by phosphatase 2A-mediated regulation of auxin transporter recycling.</title>
        <authorList>
            <person name="Karampelias M."/>
            <person name="Neyt P."/>
            <person name="De Groeve S."/>
            <person name="Aesaert S."/>
            <person name="Coussens G."/>
            <person name="Rolcik J."/>
            <person name="Bruno L."/>
            <person name="De Winne N."/>
            <person name="Van Minnebruggen A."/>
            <person name="Van Montagu M."/>
            <person name="Ponce M.R."/>
            <person name="Micol J.L."/>
            <person name="Friml J."/>
            <person name="De Jaeger G."/>
            <person name="Van Lijsebettens M."/>
        </authorList>
    </citation>
    <scope>INTERACTION WITH SIC/RON3</scope>
    <source>
        <strain>cv. Columbia</strain>
        <strain>cv. Landsberg erecta</strain>
    </source>
</reference>
<reference key="10">
    <citation type="journal article" date="2017" name="Plant Cell Environ.">
        <title>Methylation of protein phosphatase 2A-influence of regulators and environmental stress factors.</title>
        <authorList>
            <person name="Creighton M.T."/>
            <person name="Kolton A."/>
            <person name="Kataya A.R.A."/>
            <person name="Maple-Groedem J."/>
            <person name="Averkina I.O."/>
            <person name="Heidari B."/>
            <person name="Lillo C."/>
        </authorList>
    </citation>
    <scope>METHYLATION AT LEU-313</scope>
</reference>
<accession>P48578</accession>
<accession>Q9M2G6</accession>
<sequence length="313" mass="35767">MGANSLPTDATLDLDEQISQLMQCKPLSEQQVRALCEKAKEILMDESNVQPVKSPVTICGDIHGQFHDLAELFRIGGKCPDTNYLFMGDYVDRGYYSVETVTLLVGLKVRYPQRITILRGNHESRQITQVYGFYDECLRKYGNANVWKIFTDLFDYFPLTALVESEIFCLHGGLSPSIETLDNIRNFDRVQEVPHEGPMCDLLWSDPDDRCGWGISPRGAGYTFGQDISEQFNHTNNLKLIARAHQLVMDGFNWAHEQKVVTIFSAPNYCYRCGNMASILEVDDCRNHTFIQFEPAPRRGEPDVTRRTPDYFL</sequence>
<name>PP2A4_ARATH</name>
<proteinExistence type="evidence at protein level"/>
<gene>
    <name evidence="9" type="primary">PP2A4</name>
    <name type="synonym">EP7</name>
    <name evidence="8" type="synonym">PP2A3</name>
    <name type="ordered locus">At3g58500</name>
    <name type="ORF">F14P22.90</name>
</gene>
<comment type="function">
    <text evidence="5 6">Functions redundantly with PP2A3, and is involved in establishing auxin gradients, apical-basal axis of polarity and root and shoot apical meristem during embryogenesis. May dephosphorylate PIN1 and regulate its subcellular distribution for polar auxin transport (PubMed:23167545). The holoenzyme composed of PP2AA1, PP2A4 and B'ZETA or B'ETA acts as a negative regulator of plant innate immunity by controlling BAK1 phosphorylation state and activation in surface-localized immune receptor complexes (PubMed:25085430).</text>
</comment>
<comment type="catalytic activity">
    <reaction>
        <text>O-phospho-L-seryl-[protein] + H2O = L-seryl-[protein] + phosphate</text>
        <dbReference type="Rhea" id="RHEA:20629"/>
        <dbReference type="Rhea" id="RHEA-COMP:9863"/>
        <dbReference type="Rhea" id="RHEA-COMP:11604"/>
        <dbReference type="ChEBI" id="CHEBI:15377"/>
        <dbReference type="ChEBI" id="CHEBI:29999"/>
        <dbReference type="ChEBI" id="CHEBI:43474"/>
        <dbReference type="ChEBI" id="CHEBI:83421"/>
        <dbReference type="EC" id="3.1.3.16"/>
    </reaction>
</comment>
<comment type="catalytic activity">
    <reaction>
        <text>O-phospho-L-threonyl-[protein] + H2O = L-threonyl-[protein] + phosphate</text>
        <dbReference type="Rhea" id="RHEA:47004"/>
        <dbReference type="Rhea" id="RHEA-COMP:11060"/>
        <dbReference type="Rhea" id="RHEA-COMP:11605"/>
        <dbReference type="ChEBI" id="CHEBI:15377"/>
        <dbReference type="ChEBI" id="CHEBI:30013"/>
        <dbReference type="ChEBI" id="CHEBI:43474"/>
        <dbReference type="ChEBI" id="CHEBI:61977"/>
        <dbReference type="EC" id="3.1.3.16"/>
    </reaction>
</comment>
<comment type="cofactor">
    <cofactor evidence="1">
        <name>Mn(2+)</name>
        <dbReference type="ChEBI" id="CHEBI:29035"/>
    </cofactor>
    <text evidence="1">Binds 2 manganese ions per subunit.</text>
</comment>
<comment type="subunit">
    <text evidence="2 7">PP2A consists of a common heterodimeric core enzyme, composed of a 36 kDa catalytic subunit (subunit C) and a 65 kDa constant regulatory subunit (subunit A), that associates with a variety of regulatory subunits such as subunits B (the R2/B/PR55/B55, R3/B''/PR72/PR130/PR59 and R5/B'/B56 families) (By similarity). Interacts with SIC/RON3 (PubMed:26888284).</text>
</comment>
<comment type="subcellular location">
    <subcellularLocation>
        <location>Cytoplasm</location>
    </subcellularLocation>
</comment>
<comment type="PTM">
    <text evidence="11">Reversibly methyl esterified on Leu-313 by leucine carboxyl methyltransferase 1 (LCMT1) and pectin methylesterase 1 (PME1). Carboxyl methylation influences the affinity of the catalytic subunit for the different regulatory subunits, thereby modulating the PP2A holoenzyme's substrate specificity, enzyme activity and cellular localization.</text>
</comment>
<comment type="PTM">
    <text evidence="3">Phosphorylation of either threonine (by autophosphorylation-activated protein kinase) or tyrosine results in inactivation of the phosphatase. Auto-dephosphorylation has been suggested as a mechanism for reactivation.</text>
</comment>
<comment type="similarity">
    <text evidence="10">Belongs to the PPP phosphatase family. PP-2A subfamily.</text>
</comment>
<comment type="sequence caution" evidence="10">
    <conflict type="erroneous gene model prediction">
        <sequence resource="EMBL-CDS" id="CAB68188"/>
    </conflict>
</comment>
<protein>
    <recommendedName>
        <fullName>Serine/threonine-protein phosphatase PP2A-4 catalytic subunit</fullName>
        <ecNumber>3.1.3.16</ecNumber>
    </recommendedName>
    <alternativeName>
        <fullName>Protein phosphatase 2A isoform 4</fullName>
    </alternativeName>
</protein>